<name>SYDND_CERS5</name>
<comment type="function">
    <text evidence="1">Aspartyl-tRNA synthetase with relaxed tRNA specificity since it is able to aspartylate not only its cognate tRNA(Asp) but also tRNA(Asn). Reaction proceeds in two steps: L-aspartate is first activated by ATP to form Asp-AMP and then transferred to the acceptor end of tRNA(Asp/Asn).</text>
</comment>
<comment type="catalytic activity">
    <reaction evidence="1">
        <text>tRNA(Asx) + L-aspartate + ATP = L-aspartyl-tRNA(Asx) + AMP + diphosphate</text>
        <dbReference type="Rhea" id="RHEA:18349"/>
        <dbReference type="Rhea" id="RHEA-COMP:9710"/>
        <dbReference type="Rhea" id="RHEA-COMP:9711"/>
        <dbReference type="ChEBI" id="CHEBI:29991"/>
        <dbReference type="ChEBI" id="CHEBI:30616"/>
        <dbReference type="ChEBI" id="CHEBI:33019"/>
        <dbReference type="ChEBI" id="CHEBI:78442"/>
        <dbReference type="ChEBI" id="CHEBI:78516"/>
        <dbReference type="ChEBI" id="CHEBI:456215"/>
        <dbReference type="EC" id="6.1.1.23"/>
    </reaction>
</comment>
<comment type="subunit">
    <text evidence="1">Homodimer.</text>
</comment>
<comment type="subcellular location">
    <subcellularLocation>
        <location evidence="1">Cytoplasm</location>
    </subcellularLocation>
</comment>
<comment type="similarity">
    <text evidence="1">Belongs to the class-II aminoacyl-tRNA synthetase family. Type 1 subfamily.</text>
</comment>
<reference key="1">
    <citation type="submission" date="2007-04" db="EMBL/GenBank/DDBJ databases">
        <title>Complete sequence of chromosome of Rhodobacter sphaeroides ATCC 17025.</title>
        <authorList>
            <consortium name="US DOE Joint Genome Institute"/>
            <person name="Copeland A."/>
            <person name="Lucas S."/>
            <person name="Lapidus A."/>
            <person name="Barry K."/>
            <person name="Detter J.C."/>
            <person name="Glavina del Rio T."/>
            <person name="Hammon N."/>
            <person name="Israni S."/>
            <person name="Dalin E."/>
            <person name="Tice H."/>
            <person name="Pitluck S."/>
            <person name="Chertkov O."/>
            <person name="Brettin T."/>
            <person name="Bruce D."/>
            <person name="Han C."/>
            <person name="Schmutz J."/>
            <person name="Larimer F."/>
            <person name="Land M."/>
            <person name="Hauser L."/>
            <person name="Kyrpides N."/>
            <person name="Kim E."/>
            <person name="Richardson P."/>
            <person name="Mackenzie C."/>
            <person name="Choudhary M."/>
            <person name="Donohue T.J."/>
            <person name="Kaplan S."/>
        </authorList>
    </citation>
    <scope>NUCLEOTIDE SEQUENCE [LARGE SCALE GENOMIC DNA]</scope>
    <source>
        <strain>ATCC 17025 / ATH 2.4.3</strain>
    </source>
</reference>
<sequence length="591" mass="66275">MHAYRSHTCAELNAGHVGQEVRLSGWVHRVRDHGGVLFIDLRDHYGITQVIADADSPAFAELETVRAEWVIRIEGRVKGRDAALVNPKLATGEIEVYATGLTVLGAADELPMPVFGEVDYPEETRLTYRFLDLRREKLHANMMLRSNVVRSLRNRMWDAGFNEFQTPIITASSPEGARDFLVPSRLHPGKFYALPQAPQQFKQLIMVAGFDRYFQIAPCFRDEDPRADRSPTDFYQLDVEMSFVEQEDVFRAVQPVIRGIFEEFGGGRRVDADWPRIAYRDAMLWYGSDKPDLRNPIKMQVVSEHFRGSGFAIFAKLLENEGTEIRAIPAPTGGSRKFCDRMNAFAQSQGLPGMGYIFWRKGDDGAMEAAGPLAKNIGPERTEAIRQQLGLGEGDAAFFLGGKPETFEAVAGRARNEIGRELGLTEENCFRFAWIVDFPMYEKDDEGKVDFSHNPFSMPQGGMAALEGDPLKVLAYQYDLACNGYELISGGIRNHKPEIMFKAFELAGYPASEVEKRFGGMVKAFRYGAPPHGGCAAGIDRIVMLLADEANIREVIMFPMNQRAEDLLMGAPSEPTNEQLRELRLRVVPKD</sequence>
<dbReference type="EC" id="6.1.1.23" evidence="1"/>
<dbReference type="EMBL" id="CP000661">
    <property type="protein sequence ID" value="ABP69271.1"/>
    <property type="molecule type" value="Genomic_DNA"/>
</dbReference>
<dbReference type="SMR" id="A4WPF7"/>
<dbReference type="STRING" id="349102.Rsph17025_0365"/>
<dbReference type="KEGG" id="rsq:Rsph17025_0365"/>
<dbReference type="eggNOG" id="COG0173">
    <property type="taxonomic scope" value="Bacteria"/>
</dbReference>
<dbReference type="HOGENOM" id="CLU_014330_3_2_5"/>
<dbReference type="BioCyc" id="RSPH349102:G1G8M-372-MONOMER"/>
<dbReference type="GO" id="GO:0005737">
    <property type="term" value="C:cytoplasm"/>
    <property type="evidence" value="ECO:0007669"/>
    <property type="project" value="UniProtKB-SubCell"/>
</dbReference>
<dbReference type="GO" id="GO:0004815">
    <property type="term" value="F:aspartate-tRNA ligase activity"/>
    <property type="evidence" value="ECO:0007669"/>
    <property type="project" value="UniProtKB-UniRule"/>
</dbReference>
<dbReference type="GO" id="GO:0050560">
    <property type="term" value="F:aspartate-tRNA(Asn) ligase activity"/>
    <property type="evidence" value="ECO:0007669"/>
    <property type="project" value="UniProtKB-EC"/>
</dbReference>
<dbReference type="GO" id="GO:0005524">
    <property type="term" value="F:ATP binding"/>
    <property type="evidence" value="ECO:0007669"/>
    <property type="project" value="UniProtKB-UniRule"/>
</dbReference>
<dbReference type="GO" id="GO:0003676">
    <property type="term" value="F:nucleic acid binding"/>
    <property type="evidence" value="ECO:0007669"/>
    <property type="project" value="InterPro"/>
</dbReference>
<dbReference type="GO" id="GO:0006422">
    <property type="term" value="P:aspartyl-tRNA aminoacylation"/>
    <property type="evidence" value="ECO:0007669"/>
    <property type="project" value="UniProtKB-UniRule"/>
</dbReference>
<dbReference type="CDD" id="cd04317">
    <property type="entry name" value="EcAspRS_like_N"/>
    <property type="match status" value="1"/>
</dbReference>
<dbReference type="Gene3D" id="3.30.930.10">
    <property type="entry name" value="Bira Bifunctional Protein, Domain 2"/>
    <property type="match status" value="1"/>
</dbReference>
<dbReference type="Gene3D" id="3.30.1360.30">
    <property type="entry name" value="GAD-like domain"/>
    <property type="match status" value="1"/>
</dbReference>
<dbReference type="Gene3D" id="2.40.50.140">
    <property type="entry name" value="Nucleic acid-binding proteins"/>
    <property type="match status" value="1"/>
</dbReference>
<dbReference type="HAMAP" id="MF_00044">
    <property type="entry name" value="Asp_tRNA_synth_type1"/>
    <property type="match status" value="1"/>
</dbReference>
<dbReference type="InterPro" id="IPR004364">
    <property type="entry name" value="Aa-tRNA-synt_II"/>
</dbReference>
<dbReference type="InterPro" id="IPR006195">
    <property type="entry name" value="aa-tRNA-synth_II"/>
</dbReference>
<dbReference type="InterPro" id="IPR045864">
    <property type="entry name" value="aa-tRNA-synth_II/BPL/LPL"/>
</dbReference>
<dbReference type="InterPro" id="IPR004524">
    <property type="entry name" value="Asp-tRNA-ligase_1"/>
</dbReference>
<dbReference type="InterPro" id="IPR047089">
    <property type="entry name" value="Asp-tRNA-ligase_1_N"/>
</dbReference>
<dbReference type="InterPro" id="IPR002312">
    <property type="entry name" value="Asp/Asn-tRNA-synth_IIb"/>
</dbReference>
<dbReference type="InterPro" id="IPR004115">
    <property type="entry name" value="GAD-like_sf"/>
</dbReference>
<dbReference type="InterPro" id="IPR029351">
    <property type="entry name" value="GAD_dom"/>
</dbReference>
<dbReference type="InterPro" id="IPR012340">
    <property type="entry name" value="NA-bd_OB-fold"/>
</dbReference>
<dbReference type="InterPro" id="IPR004365">
    <property type="entry name" value="NA-bd_OB_tRNA"/>
</dbReference>
<dbReference type="NCBIfam" id="TIGR00459">
    <property type="entry name" value="aspS_bact"/>
    <property type="match status" value="1"/>
</dbReference>
<dbReference type="NCBIfam" id="NF001750">
    <property type="entry name" value="PRK00476.1"/>
    <property type="match status" value="1"/>
</dbReference>
<dbReference type="PANTHER" id="PTHR22594:SF5">
    <property type="entry name" value="ASPARTATE--TRNA LIGASE, MITOCHONDRIAL"/>
    <property type="match status" value="1"/>
</dbReference>
<dbReference type="PANTHER" id="PTHR22594">
    <property type="entry name" value="ASPARTYL/LYSYL-TRNA SYNTHETASE"/>
    <property type="match status" value="1"/>
</dbReference>
<dbReference type="Pfam" id="PF02938">
    <property type="entry name" value="GAD"/>
    <property type="match status" value="1"/>
</dbReference>
<dbReference type="Pfam" id="PF00152">
    <property type="entry name" value="tRNA-synt_2"/>
    <property type="match status" value="1"/>
</dbReference>
<dbReference type="Pfam" id="PF01336">
    <property type="entry name" value="tRNA_anti-codon"/>
    <property type="match status" value="1"/>
</dbReference>
<dbReference type="PRINTS" id="PR01042">
    <property type="entry name" value="TRNASYNTHASP"/>
</dbReference>
<dbReference type="SUPFAM" id="SSF55681">
    <property type="entry name" value="Class II aaRS and biotin synthetases"/>
    <property type="match status" value="1"/>
</dbReference>
<dbReference type="SUPFAM" id="SSF55261">
    <property type="entry name" value="GAD domain-like"/>
    <property type="match status" value="1"/>
</dbReference>
<dbReference type="SUPFAM" id="SSF50249">
    <property type="entry name" value="Nucleic acid-binding proteins"/>
    <property type="match status" value="1"/>
</dbReference>
<dbReference type="PROSITE" id="PS50862">
    <property type="entry name" value="AA_TRNA_LIGASE_II"/>
    <property type="match status" value="1"/>
</dbReference>
<evidence type="ECO:0000255" key="1">
    <source>
        <dbReference type="HAMAP-Rule" id="MF_00044"/>
    </source>
</evidence>
<accession>A4WPF7</accession>
<organism>
    <name type="scientific">Cereibacter sphaeroides (strain ATCC 17025 / ATH 2.4.3)</name>
    <name type="common">Rhodobacter sphaeroides</name>
    <dbReference type="NCBI Taxonomy" id="349102"/>
    <lineage>
        <taxon>Bacteria</taxon>
        <taxon>Pseudomonadati</taxon>
        <taxon>Pseudomonadota</taxon>
        <taxon>Alphaproteobacteria</taxon>
        <taxon>Rhodobacterales</taxon>
        <taxon>Paracoccaceae</taxon>
        <taxon>Cereibacter</taxon>
    </lineage>
</organism>
<feature type="chain" id="PRO_1000006743" description="Aspartate--tRNA(Asp/Asn) ligase">
    <location>
        <begin position="1"/>
        <end position="591"/>
    </location>
</feature>
<feature type="region of interest" description="Aspartate" evidence="1">
    <location>
        <begin position="199"/>
        <end position="202"/>
    </location>
</feature>
<feature type="binding site" evidence="1">
    <location>
        <position position="175"/>
    </location>
    <ligand>
        <name>L-aspartate</name>
        <dbReference type="ChEBI" id="CHEBI:29991"/>
    </ligand>
</feature>
<feature type="binding site" evidence="1">
    <location>
        <begin position="221"/>
        <end position="223"/>
    </location>
    <ligand>
        <name>ATP</name>
        <dbReference type="ChEBI" id="CHEBI:30616"/>
    </ligand>
</feature>
<feature type="binding site" evidence="1">
    <location>
        <position position="221"/>
    </location>
    <ligand>
        <name>L-aspartate</name>
        <dbReference type="ChEBI" id="CHEBI:29991"/>
    </ligand>
</feature>
<feature type="binding site" evidence="1">
    <location>
        <position position="453"/>
    </location>
    <ligand>
        <name>L-aspartate</name>
        <dbReference type="ChEBI" id="CHEBI:29991"/>
    </ligand>
</feature>
<feature type="binding site" evidence="1">
    <location>
        <position position="486"/>
    </location>
    <ligand>
        <name>ATP</name>
        <dbReference type="ChEBI" id="CHEBI:30616"/>
    </ligand>
</feature>
<feature type="binding site" evidence="1">
    <location>
        <position position="493"/>
    </location>
    <ligand>
        <name>L-aspartate</name>
        <dbReference type="ChEBI" id="CHEBI:29991"/>
    </ligand>
</feature>
<feature type="binding site" evidence="1">
    <location>
        <begin position="538"/>
        <end position="541"/>
    </location>
    <ligand>
        <name>ATP</name>
        <dbReference type="ChEBI" id="CHEBI:30616"/>
    </ligand>
</feature>
<feature type="site" description="Important for tRNA non-discrimination" evidence="1">
    <location>
        <position position="33"/>
    </location>
</feature>
<protein>
    <recommendedName>
        <fullName evidence="1">Aspartate--tRNA(Asp/Asn) ligase</fullName>
        <ecNumber evidence="1">6.1.1.23</ecNumber>
    </recommendedName>
    <alternativeName>
        <fullName evidence="1">Aspartyl-tRNA synthetase</fullName>
        <shortName evidence="1">AspRS</shortName>
    </alternativeName>
    <alternativeName>
        <fullName evidence="1">Non-discriminating aspartyl-tRNA synthetase</fullName>
        <shortName evidence="1">ND-AspRS</shortName>
    </alternativeName>
</protein>
<proteinExistence type="inferred from homology"/>
<keyword id="KW-0030">Aminoacyl-tRNA synthetase</keyword>
<keyword id="KW-0067">ATP-binding</keyword>
<keyword id="KW-0963">Cytoplasm</keyword>
<keyword id="KW-0436">Ligase</keyword>
<keyword id="KW-0547">Nucleotide-binding</keyword>
<keyword id="KW-0648">Protein biosynthesis</keyword>
<gene>
    <name evidence="1" type="primary">aspS</name>
    <name type="ordered locus">Rsph17025_0365</name>
</gene>